<accession>Q123F6</accession>
<protein>
    <recommendedName>
        <fullName evidence="2">Elongation factor Tu</fullName>
        <shortName evidence="2">EF-Tu</shortName>
        <ecNumber evidence="2">3.6.5.3</ecNumber>
    </recommendedName>
</protein>
<gene>
    <name evidence="2" type="primary">tuf1</name>
    <name type="ordered locus">Bpro_0254</name>
</gene>
<gene>
    <name evidence="2" type="primary">tuf2</name>
    <name type="ordered locus">Bpro_4449</name>
</gene>
<sequence length="396" mass="42940">MAKGKFERTKPHVNVGTIGHVDHGKTTLTAAITTVLASKFGGEAKGYDQIDAAPEEKARGITINTAHVEYETANRHYAHVDCPGHADYVKNMITGAAQMDGAILVCSAADGPMPQTREHILLARQVGVPYIIVFLNKCDMVDDAELLELVEMEVRELLDKYDFPGDKTPIIHGSAKLAMEGDKGPLGEQAIMKLADALDTYIPLPERAVDGAFLMPVEDVFSISGRGTVVTGRVERGVIKVGEEIEIVGIADTQKTTCTGVEMFRKLLDQGQAGDNVGILLRGTKREDVQRGQVLCKPGSIKPHTHFTGEIYVLSKDEGGRHTPFFNNYRPQFYFRTTDVTGAIELPEGKEMVMPGDNVSITVKLINPIAMEEGLRFAIREGGKTVGAGVVAKIIA</sequence>
<feature type="chain" id="PRO_0000337465" description="Elongation factor Tu">
    <location>
        <begin position="1"/>
        <end position="396"/>
    </location>
</feature>
<feature type="domain" description="tr-type G">
    <location>
        <begin position="10"/>
        <end position="206"/>
    </location>
</feature>
<feature type="region of interest" description="G1" evidence="1">
    <location>
        <begin position="19"/>
        <end position="26"/>
    </location>
</feature>
<feature type="region of interest" description="G2" evidence="1">
    <location>
        <begin position="60"/>
        <end position="64"/>
    </location>
</feature>
<feature type="region of interest" description="G3" evidence="1">
    <location>
        <begin position="81"/>
        <end position="84"/>
    </location>
</feature>
<feature type="region of interest" description="G4" evidence="1">
    <location>
        <begin position="136"/>
        <end position="139"/>
    </location>
</feature>
<feature type="region of interest" description="G5" evidence="1">
    <location>
        <begin position="174"/>
        <end position="176"/>
    </location>
</feature>
<feature type="binding site" evidence="2">
    <location>
        <begin position="19"/>
        <end position="26"/>
    </location>
    <ligand>
        <name>GTP</name>
        <dbReference type="ChEBI" id="CHEBI:37565"/>
    </ligand>
</feature>
<feature type="binding site" evidence="2">
    <location>
        <position position="26"/>
    </location>
    <ligand>
        <name>Mg(2+)</name>
        <dbReference type="ChEBI" id="CHEBI:18420"/>
    </ligand>
</feature>
<feature type="binding site" evidence="2">
    <location>
        <begin position="81"/>
        <end position="85"/>
    </location>
    <ligand>
        <name>GTP</name>
        <dbReference type="ChEBI" id="CHEBI:37565"/>
    </ligand>
</feature>
<feature type="binding site" evidence="2">
    <location>
        <begin position="136"/>
        <end position="139"/>
    </location>
    <ligand>
        <name>GTP</name>
        <dbReference type="ChEBI" id="CHEBI:37565"/>
    </ligand>
</feature>
<dbReference type="EC" id="3.6.5.3" evidence="2"/>
<dbReference type="EMBL" id="CP000316">
    <property type="protein sequence ID" value="ABE42219.1"/>
    <property type="molecule type" value="Genomic_DNA"/>
</dbReference>
<dbReference type="EMBL" id="CP000316">
    <property type="protein sequence ID" value="ABE46336.1"/>
    <property type="molecule type" value="Genomic_DNA"/>
</dbReference>
<dbReference type="RefSeq" id="WP_011481228.1">
    <property type="nucleotide sequence ID" value="NC_007948.1"/>
</dbReference>
<dbReference type="SMR" id="Q123F6"/>
<dbReference type="STRING" id="296591.Bpro_0254"/>
<dbReference type="KEGG" id="pol:Bpro_0254"/>
<dbReference type="KEGG" id="pol:Bpro_4449"/>
<dbReference type="eggNOG" id="COG0050">
    <property type="taxonomic scope" value="Bacteria"/>
</dbReference>
<dbReference type="HOGENOM" id="CLU_007265_0_0_4"/>
<dbReference type="OrthoDB" id="9803139at2"/>
<dbReference type="Proteomes" id="UP000001983">
    <property type="component" value="Chromosome"/>
</dbReference>
<dbReference type="GO" id="GO:0005829">
    <property type="term" value="C:cytosol"/>
    <property type="evidence" value="ECO:0007669"/>
    <property type="project" value="TreeGrafter"/>
</dbReference>
<dbReference type="GO" id="GO:0005525">
    <property type="term" value="F:GTP binding"/>
    <property type="evidence" value="ECO:0007669"/>
    <property type="project" value="UniProtKB-UniRule"/>
</dbReference>
<dbReference type="GO" id="GO:0003924">
    <property type="term" value="F:GTPase activity"/>
    <property type="evidence" value="ECO:0007669"/>
    <property type="project" value="InterPro"/>
</dbReference>
<dbReference type="GO" id="GO:0097216">
    <property type="term" value="F:guanosine tetraphosphate binding"/>
    <property type="evidence" value="ECO:0007669"/>
    <property type="project" value="UniProtKB-ARBA"/>
</dbReference>
<dbReference type="GO" id="GO:0003746">
    <property type="term" value="F:translation elongation factor activity"/>
    <property type="evidence" value="ECO:0007669"/>
    <property type="project" value="UniProtKB-UniRule"/>
</dbReference>
<dbReference type="CDD" id="cd01884">
    <property type="entry name" value="EF_Tu"/>
    <property type="match status" value="1"/>
</dbReference>
<dbReference type="CDD" id="cd03697">
    <property type="entry name" value="EFTU_II"/>
    <property type="match status" value="1"/>
</dbReference>
<dbReference type="CDD" id="cd03707">
    <property type="entry name" value="EFTU_III"/>
    <property type="match status" value="1"/>
</dbReference>
<dbReference type="FunFam" id="2.40.30.10:FF:000001">
    <property type="entry name" value="Elongation factor Tu"/>
    <property type="match status" value="1"/>
</dbReference>
<dbReference type="FunFam" id="3.40.50.300:FF:000003">
    <property type="entry name" value="Elongation factor Tu"/>
    <property type="match status" value="1"/>
</dbReference>
<dbReference type="Gene3D" id="3.40.50.300">
    <property type="entry name" value="P-loop containing nucleotide triphosphate hydrolases"/>
    <property type="match status" value="1"/>
</dbReference>
<dbReference type="Gene3D" id="2.40.30.10">
    <property type="entry name" value="Translation factors"/>
    <property type="match status" value="2"/>
</dbReference>
<dbReference type="HAMAP" id="MF_00118_B">
    <property type="entry name" value="EF_Tu_B"/>
    <property type="match status" value="1"/>
</dbReference>
<dbReference type="InterPro" id="IPR041709">
    <property type="entry name" value="EF-Tu_GTP-bd"/>
</dbReference>
<dbReference type="InterPro" id="IPR050055">
    <property type="entry name" value="EF-Tu_GTPase"/>
</dbReference>
<dbReference type="InterPro" id="IPR004161">
    <property type="entry name" value="EFTu-like_2"/>
</dbReference>
<dbReference type="InterPro" id="IPR033720">
    <property type="entry name" value="EFTU_2"/>
</dbReference>
<dbReference type="InterPro" id="IPR031157">
    <property type="entry name" value="G_TR_CS"/>
</dbReference>
<dbReference type="InterPro" id="IPR027417">
    <property type="entry name" value="P-loop_NTPase"/>
</dbReference>
<dbReference type="InterPro" id="IPR005225">
    <property type="entry name" value="Small_GTP-bd"/>
</dbReference>
<dbReference type="InterPro" id="IPR000795">
    <property type="entry name" value="T_Tr_GTP-bd_dom"/>
</dbReference>
<dbReference type="InterPro" id="IPR009000">
    <property type="entry name" value="Transl_B-barrel_sf"/>
</dbReference>
<dbReference type="InterPro" id="IPR009001">
    <property type="entry name" value="Transl_elong_EF1A/Init_IF2_C"/>
</dbReference>
<dbReference type="InterPro" id="IPR004541">
    <property type="entry name" value="Transl_elong_EFTu/EF1A_bac/org"/>
</dbReference>
<dbReference type="InterPro" id="IPR004160">
    <property type="entry name" value="Transl_elong_EFTu/EF1A_C"/>
</dbReference>
<dbReference type="NCBIfam" id="TIGR00485">
    <property type="entry name" value="EF-Tu"/>
    <property type="match status" value="1"/>
</dbReference>
<dbReference type="NCBIfam" id="NF000766">
    <property type="entry name" value="PRK00049.1"/>
    <property type="match status" value="1"/>
</dbReference>
<dbReference type="NCBIfam" id="NF009372">
    <property type="entry name" value="PRK12735.1"/>
    <property type="match status" value="1"/>
</dbReference>
<dbReference type="NCBIfam" id="NF009373">
    <property type="entry name" value="PRK12736.1"/>
    <property type="match status" value="1"/>
</dbReference>
<dbReference type="NCBIfam" id="TIGR00231">
    <property type="entry name" value="small_GTP"/>
    <property type="match status" value="1"/>
</dbReference>
<dbReference type="PANTHER" id="PTHR43721:SF22">
    <property type="entry name" value="ELONGATION FACTOR TU, MITOCHONDRIAL"/>
    <property type="match status" value="1"/>
</dbReference>
<dbReference type="PANTHER" id="PTHR43721">
    <property type="entry name" value="ELONGATION FACTOR TU-RELATED"/>
    <property type="match status" value="1"/>
</dbReference>
<dbReference type="Pfam" id="PF00009">
    <property type="entry name" value="GTP_EFTU"/>
    <property type="match status" value="1"/>
</dbReference>
<dbReference type="Pfam" id="PF03144">
    <property type="entry name" value="GTP_EFTU_D2"/>
    <property type="match status" value="1"/>
</dbReference>
<dbReference type="Pfam" id="PF03143">
    <property type="entry name" value="GTP_EFTU_D3"/>
    <property type="match status" value="1"/>
</dbReference>
<dbReference type="PRINTS" id="PR00315">
    <property type="entry name" value="ELONGATNFCT"/>
</dbReference>
<dbReference type="SUPFAM" id="SSF50465">
    <property type="entry name" value="EF-Tu/eEF-1alpha/eIF2-gamma C-terminal domain"/>
    <property type="match status" value="1"/>
</dbReference>
<dbReference type="SUPFAM" id="SSF52540">
    <property type="entry name" value="P-loop containing nucleoside triphosphate hydrolases"/>
    <property type="match status" value="1"/>
</dbReference>
<dbReference type="SUPFAM" id="SSF50447">
    <property type="entry name" value="Translation proteins"/>
    <property type="match status" value="1"/>
</dbReference>
<dbReference type="PROSITE" id="PS00301">
    <property type="entry name" value="G_TR_1"/>
    <property type="match status" value="1"/>
</dbReference>
<dbReference type="PROSITE" id="PS51722">
    <property type="entry name" value="G_TR_2"/>
    <property type="match status" value="1"/>
</dbReference>
<name>EFTU_POLSJ</name>
<organism>
    <name type="scientific">Polaromonas sp. (strain JS666 / ATCC BAA-500)</name>
    <dbReference type="NCBI Taxonomy" id="296591"/>
    <lineage>
        <taxon>Bacteria</taxon>
        <taxon>Pseudomonadati</taxon>
        <taxon>Pseudomonadota</taxon>
        <taxon>Betaproteobacteria</taxon>
        <taxon>Burkholderiales</taxon>
        <taxon>Comamonadaceae</taxon>
        <taxon>Polaromonas</taxon>
    </lineage>
</organism>
<proteinExistence type="inferred from homology"/>
<evidence type="ECO:0000250" key="1"/>
<evidence type="ECO:0000255" key="2">
    <source>
        <dbReference type="HAMAP-Rule" id="MF_00118"/>
    </source>
</evidence>
<keyword id="KW-0963">Cytoplasm</keyword>
<keyword id="KW-0251">Elongation factor</keyword>
<keyword id="KW-0342">GTP-binding</keyword>
<keyword id="KW-0378">Hydrolase</keyword>
<keyword id="KW-0460">Magnesium</keyword>
<keyword id="KW-0479">Metal-binding</keyword>
<keyword id="KW-0547">Nucleotide-binding</keyword>
<keyword id="KW-0648">Protein biosynthesis</keyword>
<keyword id="KW-1185">Reference proteome</keyword>
<comment type="function">
    <text evidence="2">GTP hydrolase that promotes the GTP-dependent binding of aminoacyl-tRNA to the A-site of ribosomes during protein biosynthesis.</text>
</comment>
<comment type="catalytic activity">
    <reaction evidence="2">
        <text>GTP + H2O = GDP + phosphate + H(+)</text>
        <dbReference type="Rhea" id="RHEA:19669"/>
        <dbReference type="ChEBI" id="CHEBI:15377"/>
        <dbReference type="ChEBI" id="CHEBI:15378"/>
        <dbReference type="ChEBI" id="CHEBI:37565"/>
        <dbReference type="ChEBI" id="CHEBI:43474"/>
        <dbReference type="ChEBI" id="CHEBI:58189"/>
        <dbReference type="EC" id="3.6.5.3"/>
    </reaction>
    <physiologicalReaction direction="left-to-right" evidence="2">
        <dbReference type="Rhea" id="RHEA:19670"/>
    </physiologicalReaction>
</comment>
<comment type="subunit">
    <text evidence="2">Monomer.</text>
</comment>
<comment type="subcellular location">
    <subcellularLocation>
        <location evidence="2">Cytoplasm</location>
    </subcellularLocation>
</comment>
<comment type="similarity">
    <text evidence="2">Belongs to the TRAFAC class translation factor GTPase superfamily. Classic translation factor GTPase family. EF-Tu/EF-1A subfamily.</text>
</comment>
<reference key="1">
    <citation type="journal article" date="2008" name="Appl. Environ. Microbiol.">
        <title>The genome of Polaromonas sp. strain JS666: insights into the evolution of a hydrocarbon- and xenobiotic-degrading bacterium, and features of relevance to biotechnology.</title>
        <authorList>
            <person name="Mattes T.E."/>
            <person name="Alexander A.K."/>
            <person name="Richardson P.M."/>
            <person name="Munk A.C."/>
            <person name="Han C.S."/>
            <person name="Stothard P."/>
            <person name="Coleman N.V."/>
        </authorList>
    </citation>
    <scope>NUCLEOTIDE SEQUENCE [LARGE SCALE GENOMIC DNA]</scope>
    <source>
        <strain>JS666 / ATCC BAA-500</strain>
    </source>
</reference>